<evidence type="ECO:0000250" key="1">
    <source>
        <dbReference type="UniProtKB" id="A9JX07"/>
    </source>
</evidence>
<evidence type="ECO:0000305" key="2"/>
<reference key="1">
    <citation type="journal article" date="2001" name="Lancet">
        <title>Whole genome sequencing of meticillin-resistant Staphylococcus aureus.</title>
        <authorList>
            <person name="Kuroda M."/>
            <person name="Ohta T."/>
            <person name="Uchiyama I."/>
            <person name="Baba T."/>
            <person name="Yuzawa H."/>
            <person name="Kobayashi I."/>
            <person name="Cui L."/>
            <person name="Oguchi A."/>
            <person name="Aoki K."/>
            <person name="Nagai Y."/>
            <person name="Lian J.-Q."/>
            <person name="Ito T."/>
            <person name="Kanamori M."/>
            <person name="Matsumaru H."/>
            <person name="Maruyama A."/>
            <person name="Murakami H."/>
            <person name="Hosoyama A."/>
            <person name="Mizutani-Ui Y."/>
            <person name="Takahashi N.K."/>
            <person name="Sawano T."/>
            <person name="Inoue R."/>
            <person name="Kaito C."/>
            <person name="Sekimizu K."/>
            <person name="Hirakawa H."/>
            <person name="Kuhara S."/>
            <person name="Goto S."/>
            <person name="Yabuzaki J."/>
            <person name="Kanehisa M."/>
            <person name="Yamashita A."/>
            <person name="Oshima K."/>
            <person name="Furuya K."/>
            <person name="Yoshino C."/>
            <person name="Shiba T."/>
            <person name="Hattori M."/>
            <person name="Ogasawara N."/>
            <person name="Hayashi H."/>
            <person name="Hiramatsu K."/>
        </authorList>
    </citation>
    <scope>NUCLEOTIDE SEQUENCE [LARGE SCALE GENOMIC DNA]</scope>
    <source>
        <strain>N315</strain>
    </source>
</reference>
<comment type="function">
    <text evidence="1">Peptide which can recruit, activate and subsequently lyse human neutrophils, thus eliminating the main cellular defense against infection.</text>
</comment>
<comment type="similarity">
    <text evidence="2">Belongs to the phenol-soluble modulin alpha peptides family.</text>
</comment>
<proteinExistence type="inferred from homology"/>
<accession>P0C811</accession>
<dbReference type="EMBL" id="BA000018">
    <property type="status" value="NOT_ANNOTATED_CDS"/>
    <property type="molecule type" value="Genomic_DNA"/>
</dbReference>
<dbReference type="RefSeq" id="WP_014373779.1">
    <property type="nucleotide sequence ID" value="NC_002745.2"/>
</dbReference>
<dbReference type="SMR" id="P0C811"/>
<dbReference type="GO" id="GO:0031640">
    <property type="term" value="P:killing of cells of another organism"/>
    <property type="evidence" value="ECO:0007669"/>
    <property type="project" value="UniProtKB-KW"/>
</dbReference>
<dbReference type="InterPro" id="IPR031429">
    <property type="entry name" value="PSM_alpha"/>
</dbReference>
<dbReference type="InterPro" id="IPR053383">
    <property type="entry name" value="PSM_alpha_peptides"/>
</dbReference>
<dbReference type="NCBIfam" id="NF033426">
    <property type="entry name" value="PSM_alpha_3"/>
    <property type="match status" value="1"/>
</dbReference>
<dbReference type="Pfam" id="PF17063">
    <property type="entry name" value="PSMalpha"/>
    <property type="match status" value="1"/>
</dbReference>
<keyword id="KW-0204">Cytolysis</keyword>
<keyword id="KW-0843">Virulence</keyword>
<name>PSMA3_STAAN</name>
<sequence length="22" mass="2607">MEFVAKLFKFFKDLLGKFLGNN</sequence>
<protein>
    <recommendedName>
        <fullName>Phenol-soluble modulin alpha 3 peptide</fullName>
    </recommendedName>
</protein>
<gene>
    <name type="primary">psmA3</name>
    <name type="ordered locus">SA0410.3</name>
</gene>
<organism>
    <name type="scientific">Staphylococcus aureus (strain N315)</name>
    <dbReference type="NCBI Taxonomy" id="158879"/>
    <lineage>
        <taxon>Bacteria</taxon>
        <taxon>Bacillati</taxon>
        <taxon>Bacillota</taxon>
        <taxon>Bacilli</taxon>
        <taxon>Bacillales</taxon>
        <taxon>Staphylococcaceae</taxon>
        <taxon>Staphylococcus</taxon>
    </lineage>
</organism>
<feature type="peptide" id="PRO_0000345066" description="Phenol-soluble modulin alpha 3 peptide">
    <location>
        <begin position="1"/>
        <end position="22"/>
    </location>
</feature>